<comment type="function">
    <text>Occurs in almost all aerobically respiring organisms and serves to protect cells from the toxic effects of hydrogen peroxide.</text>
</comment>
<comment type="catalytic activity">
    <reaction evidence="2">
        <text>2 H2O2 = O2 + 2 H2O</text>
        <dbReference type="Rhea" id="RHEA:20309"/>
        <dbReference type="ChEBI" id="CHEBI:15377"/>
        <dbReference type="ChEBI" id="CHEBI:15379"/>
        <dbReference type="ChEBI" id="CHEBI:16240"/>
        <dbReference type="EC" id="1.11.1.6"/>
    </reaction>
</comment>
<comment type="cofactor">
    <cofactor>
        <name>heme</name>
        <dbReference type="ChEBI" id="CHEBI:30413"/>
    </cofactor>
</comment>
<comment type="similarity">
    <text evidence="4">Belongs to the catalase family.</text>
</comment>
<evidence type="ECO:0000250" key="1"/>
<evidence type="ECO:0000255" key="2">
    <source>
        <dbReference type="PROSITE-ProRule" id="PRU10013"/>
    </source>
</evidence>
<evidence type="ECO:0000256" key="3">
    <source>
        <dbReference type="SAM" id="MobiDB-lite"/>
    </source>
</evidence>
<evidence type="ECO:0000305" key="4"/>
<gene>
    <name type="primary">catR</name>
</gene>
<name>CATR_ASPNG</name>
<accession>P55303</accession>
<sequence>MRHFWLLPAVAGIAGAQCPYLSGEMSFTQEQDNAGDTIEVTEQPIDNTLYVNDTGSYMTTDFGTPISDQTSLKAGPRGPTLLEDFIFRQKLQRFDHERVPERVVHARGAGAYGTFKSYADWSNVTAADFLSANDKETPMFCRFSTVVGFRGSVDTARDVHGHACRFYTDEGNYDIVGINFAPFFIQDAIQFPDLVHAIKPMPNNEIPQAATAHTSAWDFFSQQSTALHSALWLMSGNGIPRSFRHMNGYGVHSFRFVAANGTSKVVRTPWKSQQGVASLVWDEAQAAAGKNSDYHRQDLYNAMPNGHYPKYELQAQIMDEADMLRFGFDLLDPTKLVPEEVVPYTPLGMMELNANPTNYFAEVEQAGFQPGHVVPGIDFTDDPLLQGRLFSYLDTQLTRHGGPNFEQIPVNRPRKPVHNNNRDGFGQQQIPTNNWAYTPNSMSNGYPMQANQTQGHGFFTAPYRYASGHLVRQTSPTFNDHWSQPAMFWNSLIPAEQQMVVNAIVFENSKVNSPHVRKNVVNQLNMVNNNLAVRVARGLGLDEPSPNPTYYTSNKTSNVGTFGKPLLSIEGLQVGFLASNSHPESIKQGQAMAAQFSAAGVDLNIVTEAYADGVNTTYALSDAIDFDALIIADGVQSLFASPALANQMNSTATSTLYPPARPFQILVDSFRYGKPVAAVGSGSVALKNAGIDSSRSGVYTGSSETTEKIAKEVLEGLYTFRFVDRFALDE</sequence>
<feature type="chain" id="PRO_0000084916" description="Catalase R">
    <location>
        <begin position="1"/>
        <end position="730"/>
    </location>
</feature>
<feature type="region of interest" description="Disordered" evidence="3">
    <location>
        <begin position="403"/>
        <end position="433"/>
    </location>
</feature>
<feature type="active site" evidence="2">
    <location>
        <position position="105"/>
    </location>
</feature>
<feature type="binding site" description="axial binding residue" evidence="1">
    <location>
        <position position="392"/>
    </location>
    <ligand>
        <name>heme</name>
        <dbReference type="ChEBI" id="CHEBI:30413"/>
    </ligand>
    <ligandPart>
        <name>Fe</name>
        <dbReference type="ChEBI" id="CHEBI:18248"/>
    </ligandPart>
</feature>
<dbReference type="EC" id="1.11.1.6"/>
<dbReference type="EMBL" id="Z23138">
    <property type="protein sequence ID" value="CAA80669.1"/>
    <property type="molecule type" value="Genomic_DNA"/>
</dbReference>
<dbReference type="EMBL" id="L15474">
    <property type="protein sequence ID" value="AAA68206.1"/>
    <property type="molecule type" value="Genomic_DNA"/>
</dbReference>
<dbReference type="PIR" id="S37384">
    <property type="entry name" value="S37384"/>
</dbReference>
<dbReference type="SMR" id="P55303"/>
<dbReference type="PaxDb" id="5061-CADANGAP00000170"/>
<dbReference type="VEuPathDB" id="FungiDB:An01g01820"/>
<dbReference type="VEuPathDB" id="FungiDB:ASPNIDRAFT2_1116766"/>
<dbReference type="VEuPathDB" id="FungiDB:ATCC64974_21640"/>
<dbReference type="VEuPathDB" id="FungiDB:M747DRAFT_281300"/>
<dbReference type="eggNOG" id="KOG0047">
    <property type="taxonomic scope" value="Eukaryota"/>
</dbReference>
<dbReference type="SABIO-RK" id="P55303"/>
<dbReference type="GO" id="GO:0005829">
    <property type="term" value="C:cytosol"/>
    <property type="evidence" value="ECO:0007669"/>
    <property type="project" value="TreeGrafter"/>
</dbReference>
<dbReference type="GO" id="GO:0004096">
    <property type="term" value="F:catalase activity"/>
    <property type="evidence" value="ECO:0007669"/>
    <property type="project" value="UniProtKB-EC"/>
</dbReference>
<dbReference type="GO" id="GO:0020037">
    <property type="term" value="F:heme binding"/>
    <property type="evidence" value="ECO:0007669"/>
    <property type="project" value="InterPro"/>
</dbReference>
<dbReference type="GO" id="GO:0046872">
    <property type="term" value="F:metal ion binding"/>
    <property type="evidence" value="ECO:0007669"/>
    <property type="project" value="UniProtKB-KW"/>
</dbReference>
<dbReference type="GO" id="GO:0042744">
    <property type="term" value="P:hydrogen peroxide catabolic process"/>
    <property type="evidence" value="ECO:0007669"/>
    <property type="project" value="UniProtKB-KW"/>
</dbReference>
<dbReference type="GO" id="GO:0006979">
    <property type="term" value="P:response to oxidative stress"/>
    <property type="evidence" value="ECO:0007669"/>
    <property type="project" value="InterPro"/>
</dbReference>
<dbReference type="CDD" id="cd03132">
    <property type="entry name" value="GATase1_catalase"/>
    <property type="match status" value="1"/>
</dbReference>
<dbReference type="FunFam" id="2.40.180.10:FF:000003">
    <property type="entry name" value="Catalase"/>
    <property type="match status" value="1"/>
</dbReference>
<dbReference type="FunFam" id="3.40.50.880:FF:000043">
    <property type="entry name" value="Catalase"/>
    <property type="match status" value="1"/>
</dbReference>
<dbReference type="FunFam" id="1.20.1370.20:FF:000001">
    <property type="entry name" value="Catalase HPII"/>
    <property type="match status" value="1"/>
</dbReference>
<dbReference type="Gene3D" id="1.20.1370.20">
    <property type="match status" value="1"/>
</dbReference>
<dbReference type="Gene3D" id="3.40.50.880">
    <property type="match status" value="1"/>
</dbReference>
<dbReference type="Gene3D" id="2.40.180.10">
    <property type="entry name" value="Catalase core domain"/>
    <property type="match status" value="1"/>
</dbReference>
<dbReference type="InterPro" id="IPR018028">
    <property type="entry name" value="Catalase"/>
</dbReference>
<dbReference type="InterPro" id="IPR024708">
    <property type="entry name" value="Catalase_AS"/>
</dbReference>
<dbReference type="InterPro" id="IPR024712">
    <property type="entry name" value="Catalase_clade2"/>
</dbReference>
<dbReference type="InterPro" id="IPR043156">
    <property type="entry name" value="Catalase_clade2_helical"/>
</dbReference>
<dbReference type="InterPro" id="IPR011614">
    <property type="entry name" value="Catalase_core"/>
</dbReference>
<dbReference type="InterPro" id="IPR002226">
    <property type="entry name" value="Catalase_haem_BS"/>
</dbReference>
<dbReference type="InterPro" id="IPR010582">
    <property type="entry name" value="Catalase_immune_responsive"/>
</dbReference>
<dbReference type="InterPro" id="IPR041399">
    <property type="entry name" value="Catalase_large_C"/>
</dbReference>
<dbReference type="InterPro" id="IPR020835">
    <property type="entry name" value="Catalase_sf"/>
</dbReference>
<dbReference type="InterPro" id="IPR029062">
    <property type="entry name" value="Class_I_gatase-like"/>
</dbReference>
<dbReference type="PANTHER" id="PTHR42821">
    <property type="entry name" value="CATALASE"/>
    <property type="match status" value="1"/>
</dbReference>
<dbReference type="PANTHER" id="PTHR42821:SF3">
    <property type="entry name" value="CATALASE B"/>
    <property type="match status" value="1"/>
</dbReference>
<dbReference type="Pfam" id="PF00199">
    <property type="entry name" value="Catalase"/>
    <property type="match status" value="1"/>
</dbReference>
<dbReference type="Pfam" id="PF06628">
    <property type="entry name" value="Catalase-rel"/>
    <property type="match status" value="1"/>
</dbReference>
<dbReference type="Pfam" id="PF18011">
    <property type="entry name" value="Catalase_C"/>
    <property type="match status" value="1"/>
</dbReference>
<dbReference type="PIRSF" id="PIRSF038927">
    <property type="entry name" value="Catalase_clade2"/>
    <property type="match status" value="1"/>
</dbReference>
<dbReference type="PRINTS" id="PR00067">
    <property type="entry name" value="CATALASE"/>
</dbReference>
<dbReference type="SMART" id="SM01060">
    <property type="entry name" value="Catalase"/>
    <property type="match status" value="1"/>
</dbReference>
<dbReference type="SUPFAM" id="SSF52317">
    <property type="entry name" value="Class I glutamine amidotransferase-like"/>
    <property type="match status" value="1"/>
</dbReference>
<dbReference type="SUPFAM" id="SSF56634">
    <property type="entry name" value="Heme-dependent catalase-like"/>
    <property type="match status" value="1"/>
</dbReference>
<dbReference type="PROSITE" id="PS00437">
    <property type="entry name" value="CATALASE_1"/>
    <property type="match status" value="1"/>
</dbReference>
<dbReference type="PROSITE" id="PS00438">
    <property type="entry name" value="CATALASE_2"/>
    <property type="match status" value="1"/>
</dbReference>
<dbReference type="PROSITE" id="PS51402">
    <property type="entry name" value="CATALASE_3"/>
    <property type="match status" value="1"/>
</dbReference>
<reference key="1">
    <citation type="journal article" date="1993" name="Mol. Microbiol.">
        <title>The catR gene encoding a catalase from Aspergillus niger: primary structure and elevated expression through increased gene copy number and use of a strong promoter.</title>
        <authorList>
            <person name="Fowler T."/>
            <person name="Rey M.W."/>
            <person name="Vaha-Vahe P."/>
            <person name="Power S.D."/>
            <person name="Berka R.M."/>
        </authorList>
    </citation>
    <scope>NUCLEOTIDE SEQUENCE [GENOMIC DNA]</scope>
</reference>
<proteinExistence type="inferred from homology"/>
<organism>
    <name type="scientific">Aspergillus niger</name>
    <dbReference type="NCBI Taxonomy" id="5061"/>
    <lineage>
        <taxon>Eukaryota</taxon>
        <taxon>Fungi</taxon>
        <taxon>Dikarya</taxon>
        <taxon>Ascomycota</taxon>
        <taxon>Pezizomycotina</taxon>
        <taxon>Eurotiomycetes</taxon>
        <taxon>Eurotiomycetidae</taxon>
        <taxon>Eurotiales</taxon>
        <taxon>Aspergillaceae</taxon>
        <taxon>Aspergillus</taxon>
        <taxon>Aspergillus subgen. Circumdati</taxon>
    </lineage>
</organism>
<protein>
    <recommendedName>
        <fullName>Catalase R</fullName>
        <ecNumber>1.11.1.6</ecNumber>
    </recommendedName>
</protein>
<keyword id="KW-0349">Heme</keyword>
<keyword id="KW-0376">Hydrogen peroxide</keyword>
<keyword id="KW-0408">Iron</keyword>
<keyword id="KW-0479">Metal-binding</keyword>
<keyword id="KW-0560">Oxidoreductase</keyword>
<keyword id="KW-0575">Peroxidase</keyword>